<proteinExistence type="inferred from homology"/>
<name>COAD_PYRAE</name>
<accession>Q8ZY96</accession>
<dbReference type="EC" id="2.7.7.3" evidence="1"/>
<dbReference type="EMBL" id="AE009441">
    <property type="protein sequence ID" value="AAL63100.1"/>
    <property type="molecule type" value="Genomic_DNA"/>
</dbReference>
<dbReference type="RefSeq" id="WP_011007572.1">
    <property type="nucleotide sequence ID" value="NC_003364.1"/>
</dbReference>
<dbReference type="SMR" id="Q8ZY96"/>
<dbReference type="STRING" id="178306.PAE0887"/>
<dbReference type="EnsemblBacteria" id="AAL63100">
    <property type="protein sequence ID" value="AAL63100"/>
    <property type="gene ID" value="PAE0887"/>
</dbReference>
<dbReference type="GeneID" id="1465333"/>
<dbReference type="KEGG" id="pai:PAE0887"/>
<dbReference type="PATRIC" id="fig|178306.9.peg.652"/>
<dbReference type="eggNOG" id="arCOG01223">
    <property type="taxonomic scope" value="Archaea"/>
</dbReference>
<dbReference type="HOGENOM" id="CLU_035272_5_0_2"/>
<dbReference type="InParanoid" id="Q8ZY96"/>
<dbReference type="UniPathway" id="UPA00241"/>
<dbReference type="Proteomes" id="UP000002439">
    <property type="component" value="Chromosome"/>
</dbReference>
<dbReference type="GO" id="GO:0005737">
    <property type="term" value="C:cytoplasm"/>
    <property type="evidence" value="ECO:0007669"/>
    <property type="project" value="UniProtKB-SubCell"/>
</dbReference>
<dbReference type="GO" id="GO:0005524">
    <property type="term" value="F:ATP binding"/>
    <property type="evidence" value="ECO:0007669"/>
    <property type="project" value="UniProtKB-KW"/>
</dbReference>
<dbReference type="GO" id="GO:0004140">
    <property type="term" value="F:dephospho-CoA kinase activity"/>
    <property type="evidence" value="ECO:0000318"/>
    <property type="project" value="GO_Central"/>
</dbReference>
<dbReference type="GO" id="GO:0004595">
    <property type="term" value="F:pantetheine-phosphate adenylyltransferase activity"/>
    <property type="evidence" value="ECO:0007669"/>
    <property type="project" value="UniProtKB-UniRule"/>
</dbReference>
<dbReference type="GO" id="GO:0015937">
    <property type="term" value="P:coenzyme A biosynthetic process"/>
    <property type="evidence" value="ECO:0000318"/>
    <property type="project" value="GO_Central"/>
</dbReference>
<dbReference type="FunFam" id="3.40.50.620:FF:000376">
    <property type="entry name" value="Phosphopantetheine adenylyltransferase"/>
    <property type="match status" value="1"/>
</dbReference>
<dbReference type="Gene3D" id="3.40.50.620">
    <property type="entry name" value="HUPs"/>
    <property type="match status" value="1"/>
</dbReference>
<dbReference type="HAMAP" id="MF_00647">
    <property type="entry name" value="PPAT_arch"/>
    <property type="match status" value="1"/>
</dbReference>
<dbReference type="InterPro" id="IPR050385">
    <property type="entry name" value="Archaeal_FAD_synthase"/>
</dbReference>
<dbReference type="InterPro" id="IPR004821">
    <property type="entry name" value="Cyt_trans-like"/>
</dbReference>
<dbReference type="InterPro" id="IPR023540">
    <property type="entry name" value="PPAT_arch"/>
</dbReference>
<dbReference type="InterPro" id="IPR014729">
    <property type="entry name" value="Rossmann-like_a/b/a_fold"/>
</dbReference>
<dbReference type="NCBIfam" id="TIGR00125">
    <property type="entry name" value="cyt_tran_rel"/>
    <property type="match status" value="1"/>
</dbReference>
<dbReference type="NCBIfam" id="NF001985">
    <property type="entry name" value="PRK00777.1"/>
    <property type="match status" value="1"/>
</dbReference>
<dbReference type="PANTHER" id="PTHR43793">
    <property type="entry name" value="FAD SYNTHASE"/>
    <property type="match status" value="1"/>
</dbReference>
<dbReference type="PANTHER" id="PTHR43793:SF1">
    <property type="entry name" value="FAD SYNTHASE"/>
    <property type="match status" value="1"/>
</dbReference>
<dbReference type="Pfam" id="PF01467">
    <property type="entry name" value="CTP_transf_like"/>
    <property type="match status" value="1"/>
</dbReference>
<dbReference type="SUPFAM" id="SSF52374">
    <property type="entry name" value="Nucleotidylyl transferase"/>
    <property type="match status" value="1"/>
</dbReference>
<evidence type="ECO:0000255" key="1">
    <source>
        <dbReference type="HAMAP-Rule" id="MF_00647"/>
    </source>
</evidence>
<sequence length="155" mass="17478">MKYKFRNVVLGGTFDTLHSGHVKLLATATLIGDRILIGLTSDSFASTYKQYKVRPFSVRLANLRNLMSLIAPEREVAYVEIHDPYGPAVFDPRLEAIVASIETAPRALQINDERAKRGLRPMEVFIISTVRDGYGHTLSSTYIRRVLERPESKQS</sequence>
<protein>
    <recommendedName>
        <fullName evidence="1">Phosphopantetheine adenylyltransferase</fullName>
        <ecNumber evidence="1">2.7.7.3</ecNumber>
    </recommendedName>
    <alternativeName>
        <fullName evidence="1">Dephospho-CoA pyrophosphorylase</fullName>
    </alternativeName>
    <alternativeName>
        <fullName evidence="1">Pantetheine-phosphate adenylyltransferase</fullName>
        <shortName evidence="1">PPAT</shortName>
    </alternativeName>
</protein>
<comment type="function">
    <text evidence="1">Reversibly transfers an adenylyl group from ATP to 4'-phosphopantetheine, yielding dephospho-CoA (dPCoA) and pyrophosphate.</text>
</comment>
<comment type="catalytic activity">
    <reaction evidence="1">
        <text>(R)-4'-phosphopantetheine + ATP + H(+) = 3'-dephospho-CoA + diphosphate</text>
        <dbReference type="Rhea" id="RHEA:19801"/>
        <dbReference type="ChEBI" id="CHEBI:15378"/>
        <dbReference type="ChEBI" id="CHEBI:30616"/>
        <dbReference type="ChEBI" id="CHEBI:33019"/>
        <dbReference type="ChEBI" id="CHEBI:57328"/>
        <dbReference type="ChEBI" id="CHEBI:61723"/>
        <dbReference type="EC" id="2.7.7.3"/>
    </reaction>
</comment>
<comment type="pathway">
    <text evidence="1">Cofactor biosynthesis; coenzyme A biosynthesis.</text>
</comment>
<comment type="subcellular location">
    <subcellularLocation>
        <location evidence="1">Cytoplasm</location>
    </subcellularLocation>
</comment>
<comment type="similarity">
    <text evidence="1">Belongs to the eukaryotic CoaD family.</text>
</comment>
<gene>
    <name evidence="1" type="primary">coaD</name>
    <name type="ordered locus">PAE0887</name>
</gene>
<reference key="1">
    <citation type="journal article" date="2002" name="Proc. Natl. Acad. Sci. U.S.A.">
        <title>Genome sequence of the hyperthermophilic crenarchaeon Pyrobaculum aerophilum.</title>
        <authorList>
            <person name="Fitz-Gibbon S.T."/>
            <person name="Ladner H."/>
            <person name="Kim U.-J."/>
            <person name="Stetter K.O."/>
            <person name="Simon M.I."/>
            <person name="Miller J.H."/>
        </authorList>
    </citation>
    <scope>NUCLEOTIDE SEQUENCE [LARGE SCALE GENOMIC DNA]</scope>
    <source>
        <strain>ATCC 51768 / DSM 7523 / JCM 9630 / CIP 104966 / NBRC 100827 / IM2</strain>
    </source>
</reference>
<keyword id="KW-0067">ATP-binding</keyword>
<keyword id="KW-0173">Coenzyme A biosynthesis</keyword>
<keyword id="KW-0963">Cytoplasm</keyword>
<keyword id="KW-0547">Nucleotide-binding</keyword>
<keyword id="KW-0548">Nucleotidyltransferase</keyword>
<keyword id="KW-1185">Reference proteome</keyword>
<keyword id="KW-0808">Transferase</keyword>
<feature type="chain" id="PRO_0000156325" description="Phosphopantetheine adenylyltransferase">
    <location>
        <begin position="1"/>
        <end position="155"/>
    </location>
</feature>
<organism>
    <name type="scientific">Pyrobaculum aerophilum (strain ATCC 51768 / DSM 7523 / JCM 9630 / CIP 104966 / NBRC 100827 / IM2)</name>
    <dbReference type="NCBI Taxonomy" id="178306"/>
    <lineage>
        <taxon>Archaea</taxon>
        <taxon>Thermoproteota</taxon>
        <taxon>Thermoprotei</taxon>
        <taxon>Thermoproteales</taxon>
        <taxon>Thermoproteaceae</taxon>
        <taxon>Pyrobaculum</taxon>
    </lineage>
</organism>